<accession>P0DG67</accession>
<accession>P67052</accession>
<accession>Q9A092</accession>
<name>TYSY_STRPQ</name>
<reference key="1">
    <citation type="journal article" date="2003" name="Genome Res.">
        <title>Genome sequence of an M3 strain of Streptococcus pyogenes reveals a large-scale genomic rearrangement in invasive strains and new insights into phage evolution.</title>
        <authorList>
            <person name="Nakagawa I."/>
            <person name="Kurokawa K."/>
            <person name="Yamashita A."/>
            <person name="Nakata M."/>
            <person name="Tomiyasu Y."/>
            <person name="Okahashi N."/>
            <person name="Kawabata S."/>
            <person name="Yamazaki K."/>
            <person name="Shiba T."/>
            <person name="Yasunaga T."/>
            <person name="Hayashi H."/>
            <person name="Hattori M."/>
            <person name="Hamada S."/>
        </authorList>
    </citation>
    <scope>NUCLEOTIDE SEQUENCE [LARGE SCALE GENOMIC DNA]</scope>
    <source>
        <strain>SSI-1</strain>
    </source>
</reference>
<organism>
    <name type="scientific">Streptococcus pyogenes serotype M3 (strain SSI-1)</name>
    <dbReference type="NCBI Taxonomy" id="193567"/>
    <lineage>
        <taxon>Bacteria</taxon>
        <taxon>Bacillati</taxon>
        <taxon>Bacillota</taxon>
        <taxon>Bacilli</taxon>
        <taxon>Lactobacillales</taxon>
        <taxon>Streptococcaceae</taxon>
        <taxon>Streptococcus</taxon>
    </lineage>
</organism>
<gene>
    <name evidence="1" type="primary">thyA</name>
    <name type="ordered locus">SPs1252</name>
</gene>
<keyword id="KW-0963">Cytoplasm</keyword>
<keyword id="KW-0489">Methyltransferase</keyword>
<keyword id="KW-0545">Nucleotide biosynthesis</keyword>
<keyword id="KW-0808">Transferase</keyword>
<evidence type="ECO:0000255" key="1">
    <source>
        <dbReference type="HAMAP-Rule" id="MF_00008"/>
    </source>
</evidence>
<dbReference type="EC" id="2.1.1.45" evidence="1"/>
<dbReference type="EMBL" id="BA000034">
    <property type="protein sequence ID" value="BAC64347.1"/>
    <property type="molecule type" value="Genomic_DNA"/>
</dbReference>
<dbReference type="RefSeq" id="WP_010922172.1">
    <property type="nucleotide sequence ID" value="NC_004606.1"/>
</dbReference>
<dbReference type="SMR" id="P0DG67"/>
<dbReference type="KEGG" id="sps:SPs1252"/>
<dbReference type="HOGENOM" id="CLU_021669_0_0_9"/>
<dbReference type="UniPathway" id="UPA00575"/>
<dbReference type="GO" id="GO:0005829">
    <property type="term" value="C:cytosol"/>
    <property type="evidence" value="ECO:0007669"/>
    <property type="project" value="TreeGrafter"/>
</dbReference>
<dbReference type="GO" id="GO:0004799">
    <property type="term" value="F:thymidylate synthase activity"/>
    <property type="evidence" value="ECO:0007669"/>
    <property type="project" value="UniProtKB-UniRule"/>
</dbReference>
<dbReference type="GO" id="GO:0006231">
    <property type="term" value="P:dTMP biosynthetic process"/>
    <property type="evidence" value="ECO:0007669"/>
    <property type="project" value="UniProtKB-UniRule"/>
</dbReference>
<dbReference type="GO" id="GO:0006235">
    <property type="term" value="P:dTTP biosynthetic process"/>
    <property type="evidence" value="ECO:0007669"/>
    <property type="project" value="UniProtKB-UniRule"/>
</dbReference>
<dbReference type="GO" id="GO:0032259">
    <property type="term" value="P:methylation"/>
    <property type="evidence" value="ECO:0007669"/>
    <property type="project" value="UniProtKB-KW"/>
</dbReference>
<dbReference type="CDD" id="cd00351">
    <property type="entry name" value="TS_Pyrimidine_HMase"/>
    <property type="match status" value="1"/>
</dbReference>
<dbReference type="Gene3D" id="3.30.572.10">
    <property type="entry name" value="Thymidylate synthase/dCMP hydroxymethylase domain"/>
    <property type="match status" value="1"/>
</dbReference>
<dbReference type="HAMAP" id="MF_00008">
    <property type="entry name" value="Thymidy_synth_bact"/>
    <property type="match status" value="1"/>
</dbReference>
<dbReference type="InterPro" id="IPR045097">
    <property type="entry name" value="Thymidate_synth/dCMP_Mease"/>
</dbReference>
<dbReference type="InterPro" id="IPR023451">
    <property type="entry name" value="Thymidate_synth/dCMP_Mease_dom"/>
</dbReference>
<dbReference type="InterPro" id="IPR036926">
    <property type="entry name" value="Thymidate_synth/dCMP_Mease_sf"/>
</dbReference>
<dbReference type="InterPro" id="IPR000398">
    <property type="entry name" value="Thymidylate_synthase"/>
</dbReference>
<dbReference type="InterPro" id="IPR020940">
    <property type="entry name" value="Thymidylate_synthase_AS"/>
</dbReference>
<dbReference type="NCBIfam" id="NF002495">
    <property type="entry name" value="PRK01827.1-1"/>
    <property type="match status" value="1"/>
</dbReference>
<dbReference type="PANTHER" id="PTHR11548">
    <property type="entry name" value="THYMIDYLATE SYNTHASE 1"/>
    <property type="match status" value="1"/>
</dbReference>
<dbReference type="PANTHER" id="PTHR11548:SF1">
    <property type="entry name" value="THYMIDYLATE SYNTHASE 1"/>
    <property type="match status" value="1"/>
</dbReference>
<dbReference type="Pfam" id="PF00303">
    <property type="entry name" value="Thymidylat_synt"/>
    <property type="match status" value="1"/>
</dbReference>
<dbReference type="PRINTS" id="PR00108">
    <property type="entry name" value="THYMDSNTHASE"/>
</dbReference>
<dbReference type="SUPFAM" id="SSF55831">
    <property type="entry name" value="Thymidylate synthase/dCMP hydroxymethylase"/>
    <property type="match status" value="1"/>
</dbReference>
<dbReference type="PROSITE" id="PS00091">
    <property type="entry name" value="THYMIDYLATE_SYNTHASE"/>
    <property type="match status" value="1"/>
</dbReference>
<sequence length="279" mass="32663">MTKADQIFKANIQKIINEGSLSEQARPKYKDGRTAHSKYITGAFAEYDLAKGEFPITTLRPIPIKSAIKELFWIYQDQSNSLDVLEAKYNVHYWNEWEVDQTRTIGQRYGAVVKKHDIISKILKQLAENPWNRRNVISLWDYEAFEETKGLLPCAFQIMFDVRRVGEDLYLDASLTQRSNDILVAHHINAMQYVALQMMIAKHFGWKIGKFFYFVNNLHIYDNQFDQAQELLKRQPVASQPKLVLNVPDRTNFFDIKPDDFELQNYDPVKPQLHFDLAI</sequence>
<comment type="function">
    <text evidence="1">Catalyzes the reductive methylation of 2'-deoxyuridine-5'-monophosphate (dUMP) to 2'-deoxythymidine-5'-monophosphate (dTMP) while utilizing 5,10-methylenetetrahydrofolate (mTHF) as the methyl donor and reductant in the reaction, yielding dihydrofolate (DHF) as a by-product. This enzymatic reaction provides an intracellular de novo source of dTMP, an essential precursor for DNA biosynthesis.</text>
</comment>
<comment type="catalytic activity">
    <reaction evidence="1">
        <text>dUMP + (6R)-5,10-methylene-5,6,7,8-tetrahydrofolate = 7,8-dihydrofolate + dTMP</text>
        <dbReference type="Rhea" id="RHEA:12104"/>
        <dbReference type="ChEBI" id="CHEBI:15636"/>
        <dbReference type="ChEBI" id="CHEBI:57451"/>
        <dbReference type="ChEBI" id="CHEBI:63528"/>
        <dbReference type="ChEBI" id="CHEBI:246422"/>
        <dbReference type="EC" id="2.1.1.45"/>
    </reaction>
</comment>
<comment type="pathway">
    <text evidence="1">Pyrimidine metabolism; dTTP biosynthesis.</text>
</comment>
<comment type="subunit">
    <text evidence="1">Homodimer.</text>
</comment>
<comment type="subcellular location">
    <subcellularLocation>
        <location evidence="1">Cytoplasm</location>
    </subcellularLocation>
</comment>
<comment type="similarity">
    <text evidence="1">Belongs to the thymidylate synthase family. Bacterial-type ThyA subfamily.</text>
</comment>
<feature type="chain" id="PRO_0000411623" description="Thymidylate synthase">
    <location>
        <begin position="1"/>
        <end position="279"/>
    </location>
</feature>
<feature type="active site" description="Nucleophile" evidence="1">
    <location>
        <position position="154"/>
    </location>
</feature>
<feature type="binding site" evidence="1">
    <location>
        <begin position="133"/>
        <end position="134"/>
    </location>
    <ligand>
        <name>dUMP</name>
        <dbReference type="ChEBI" id="CHEBI:246422"/>
        <note>ligand shared between dimeric partners</note>
    </ligand>
</feature>
<feature type="binding site" description="in other chain" evidence="1">
    <location>
        <begin position="178"/>
        <end position="181"/>
    </location>
    <ligand>
        <name>dUMP</name>
        <dbReference type="ChEBI" id="CHEBI:246422"/>
        <note>ligand shared between dimeric partners</note>
    </ligand>
</feature>
<feature type="binding site" evidence="1">
    <location>
        <position position="181"/>
    </location>
    <ligand>
        <name>(6R)-5,10-methylene-5,6,7,8-tetrahydrofolate</name>
        <dbReference type="ChEBI" id="CHEBI:15636"/>
    </ligand>
</feature>
<feature type="binding site" description="in other chain" evidence="1">
    <location>
        <position position="189"/>
    </location>
    <ligand>
        <name>dUMP</name>
        <dbReference type="ChEBI" id="CHEBI:246422"/>
        <note>ligand shared between dimeric partners</note>
    </ligand>
</feature>
<feature type="binding site" description="in other chain" evidence="1">
    <location>
        <begin position="219"/>
        <end position="221"/>
    </location>
    <ligand>
        <name>dUMP</name>
        <dbReference type="ChEBI" id="CHEBI:246422"/>
        <note>ligand shared between dimeric partners</note>
    </ligand>
</feature>
<feature type="binding site" evidence="1">
    <location>
        <position position="278"/>
    </location>
    <ligand>
        <name>(6R)-5,10-methylene-5,6,7,8-tetrahydrofolate</name>
        <dbReference type="ChEBI" id="CHEBI:15636"/>
    </ligand>
</feature>
<proteinExistence type="inferred from homology"/>
<protein>
    <recommendedName>
        <fullName evidence="1">Thymidylate synthase</fullName>
        <shortName evidence="1">TS</shortName>
        <shortName evidence="1">TSase</shortName>
        <ecNumber evidence="1">2.1.1.45</ecNumber>
    </recommendedName>
</protein>